<comment type="catalytic activity">
    <reaction>
        <text>N(6)-(1,2-dicarboxyethyl)-AMP = fumarate + AMP</text>
        <dbReference type="Rhea" id="RHEA:16853"/>
        <dbReference type="ChEBI" id="CHEBI:29806"/>
        <dbReference type="ChEBI" id="CHEBI:57567"/>
        <dbReference type="ChEBI" id="CHEBI:456215"/>
        <dbReference type="EC" id="4.3.2.2"/>
    </reaction>
</comment>
<comment type="catalytic activity">
    <reaction>
        <text>(2S)-2-[5-amino-1-(5-phospho-beta-D-ribosyl)imidazole-4-carboxamido]succinate = 5-amino-1-(5-phospho-beta-D-ribosyl)imidazole-4-carboxamide + fumarate</text>
        <dbReference type="Rhea" id="RHEA:23920"/>
        <dbReference type="ChEBI" id="CHEBI:29806"/>
        <dbReference type="ChEBI" id="CHEBI:58443"/>
        <dbReference type="ChEBI" id="CHEBI:58475"/>
        <dbReference type="EC" id="4.3.2.2"/>
    </reaction>
</comment>
<comment type="pathway">
    <text>Purine metabolism; AMP biosynthesis via de novo pathway; AMP from IMP: step 2/2.</text>
</comment>
<comment type="pathway">
    <text>Purine metabolism; IMP biosynthesis via de novo pathway; 5-amino-1-(5-phospho-D-ribosyl)imidazole-4-carboxamide from 5-amino-1-(5-phospho-D-ribosyl)imidazole-4-carboxylate: step 2/2.</text>
</comment>
<comment type="subunit">
    <text evidence="1">Homotetramer. Residues from neighboring subunits contribute catalytic and substrate-binding residues to each active site (By similarity).</text>
</comment>
<comment type="similarity">
    <text evidence="2">Belongs to the lyase 1 family. Adenylosuccinate lyase subfamily.</text>
</comment>
<evidence type="ECO:0000250" key="1"/>
<evidence type="ECO:0000305" key="2"/>
<reference key="1">
    <citation type="journal article" date="2002" name="Nature">
        <title>The genome sequence of Schizosaccharomyces pombe.</title>
        <authorList>
            <person name="Wood V."/>
            <person name="Gwilliam R."/>
            <person name="Rajandream M.A."/>
            <person name="Lyne M.H."/>
            <person name="Lyne R."/>
            <person name="Stewart A."/>
            <person name="Sgouros J.G."/>
            <person name="Peat N."/>
            <person name="Hayles J."/>
            <person name="Baker S.G."/>
            <person name="Basham D."/>
            <person name="Bowman S."/>
            <person name="Brooks K."/>
            <person name="Brown D."/>
            <person name="Brown S."/>
            <person name="Chillingworth T."/>
            <person name="Churcher C.M."/>
            <person name="Collins M."/>
            <person name="Connor R."/>
            <person name="Cronin A."/>
            <person name="Davis P."/>
            <person name="Feltwell T."/>
            <person name="Fraser A."/>
            <person name="Gentles S."/>
            <person name="Goble A."/>
            <person name="Hamlin N."/>
            <person name="Harris D.E."/>
            <person name="Hidalgo J."/>
            <person name="Hodgson G."/>
            <person name="Holroyd S."/>
            <person name="Hornsby T."/>
            <person name="Howarth S."/>
            <person name="Huckle E.J."/>
            <person name="Hunt S."/>
            <person name="Jagels K."/>
            <person name="James K.D."/>
            <person name="Jones L."/>
            <person name="Jones M."/>
            <person name="Leather S."/>
            <person name="McDonald S."/>
            <person name="McLean J."/>
            <person name="Mooney P."/>
            <person name="Moule S."/>
            <person name="Mungall K.L."/>
            <person name="Murphy L.D."/>
            <person name="Niblett D."/>
            <person name="Odell C."/>
            <person name="Oliver K."/>
            <person name="O'Neil S."/>
            <person name="Pearson D."/>
            <person name="Quail M.A."/>
            <person name="Rabbinowitsch E."/>
            <person name="Rutherford K.M."/>
            <person name="Rutter S."/>
            <person name="Saunders D."/>
            <person name="Seeger K."/>
            <person name="Sharp S."/>
            <person name="Skelton J."/>
            <person name="Simmonds M.N."/>
            <person name="Squares R."/>
            <person name="Squares S."/>
            <person name="Stevens K."/>
            <person name="Taylor K."/>
            <person name="Taylor R.G."/>
            <person name="Tivey A."/>
            <person name="Walsh S.V."/>
            <person name="Warren T."/>
            <person name="Whitehead S."/>
            <person name="Woodward J.R."/>
            <person name="Volckaert G."/>
            <person name="Aert R."/>
            <person name="Robben J."/>
            <person name="Grymonprez B."/>
            <person name="Weltjens I."/>
            <person name="Vanstreels E."/>
            <person name="Rieger M."/>
            <person name="Schaefer M."/>
            <person name="Mueller-Auer S."/>
            <person name="Gabel C."/>
            <person name="Fuchs M."/>
            <person name="Duesterhoeft A."/>
            <person name="Fritzc C."/>
            <person name="Holzer E."/>
            <person name="Moestl D."/>
            <person name="Hilbert H."/>
            <person name="Borzym K."/>
            <person name="Langer I."/>
            <person name="Beck A."/>
            <person name="Lehrach H."/>
            <person name="Reinhardt R."/>
            <person name="Pohl T.M."/>
            <person name="Eger P."/>
            <person name="Zimmermann W."/>
            <person name="Wedler H."/>
            <person name="Wambutt R."/>
            <person name="Purnelle B."/>
            <person name="Goffeau A."/>
            <person name="Cadieu E."/>
            <person name="Dreano S."/>
            <person name="Gloux S."/>
            <person name="Lelaure V."/>
            <person name="Mottier S."/>
            <person name="Galibert F."/>
            <person name="Aves S.J."/>
            <person name="Xiang Z."/>
            <person name="Hunt C."/>
            <person name="Moore K."/>
            <person name="Hurst S.M."/>
            <person name="Lucas M."/>
            <person name="Rochet M."/>
            <person name="Gaillardin C."/>
            <person name="Tallada V.A."/>
            <person name="Garzon A."/>
            <person name="Thode G."/>
            <person name="Daga R.R."/>
            <person name="Cruzado L."/>
            <person name="Jimenez J."/>
            <person name="Sanchez M."/>
            <person name="del Rey F."/>
            <person name="Benito J."/>
            <person name="Dominguez A."/>
            <person name="Revuelta J.L."/>
            <person name="Moreno S."/>
            <person name="Armstrong J."/>
            <person name="Forsburg S.L."/>
            <person name="Cerutti L."/>
            <person name="Lowe T."/>
            <person name="McCombie W.R."/>
            <person name="Paulsen I."/>
            <person name="Potashkin J."/>
            <person name="Shpakovski G.V."/>
            <person name="Ussery D."/>
            <person name="Barrell B.G."/>
            <person name="Nurse P."/>
        </authorList>
    </citation>
    <scope>NUCLEOTIDE SEQUENCE [LARGE SCALE GENOMIC DNA]</scope>
    <source>
        <strain>972 / ATCC 24843</strain>
    </source>
</reference>
<sequence>MEDYGSYSTPLTARYASAEMSHLFSREMRINTWRQLWLNLAIAEKQLGLTQITDEAIEQLKAHVKITAPEFEIAAKEEKRQRHDVMAHIYTYGLAAPAASGIIHLGATSCFVTDNADLIFLRSAMDLLIPKLVNVINRLSQWSLRYKDIPTLGFTHYQPAQLTTVGKRATLWIQELLWDLRNFVRARNDIGFRGVKGTTGTQASFLALFEGDHAKVEELDKLVAKLSGFDNVYPVTGQTYDRKIDIDVLQPLASFGATAHKIATDIRLLANLKEVEEPFEAGQIGSSAMAYKRNPMRCERICSQARYIMNLIPNALNTASVQWFERTLDDSSNRRSLLPEAFLFTDSVLKILLNVISGMVIYPKVIQKHIRAELPFMATENIIMAMTKHGASRHECHEQIRVLSHQAGRVVKEEGGDNDLIERIKNTPYFAPIYDELDSLLDASTFVGRAPEQTESFVNKDVSQALAPFKSMITEEKVDLAV</sequence>
<name>PUR8_SCHPO</name>
<accession>O60105</accession>
<organism>
    <name type="scientific">Schizosaccharomyces pombe (strain 972 / ATCC 24843)</name>
    <name type="common">Fission yeast</name>
    <dbReference type="NCBI Taxonomy" id="284812"/>
    <lineage>
        <taxon>Eukaryota</taxon>
        <taxon>Fungi</taxon>
        <taxon>Dikarya</taxon>
        <taxon>Ascomycota</taxon>
        <taxon>Taphrinomycotina</taxon>
        <taxon>Schizosaccharomycetes</taxon>
        <taxon>Schizosaccharomycetales</taxon>
        <taxon>Schizosaccharomycetaceae</taxon>
        <taxon>Schizosaccharomyces</taxon>
    </lineage>
</organism>
<feature type="chain" id="PRO_0000137898" description="Adenylosuccinate lyase">
    <location>
        <begin position="1"/>
        <end position="482"/>
    </location>
</feature>
<feature type="active site" description="Proton donor/acceptor" evidence="1">
    <location>
        <position position="156"/>
    </location>
</feature>
<feature type="active site" description="Proton donor/acceptor" evidence="1">
    <location>
        <position position="286"/>
    </location>
</feature>
<feature type="binding site" evidence="1">
    <location>
        <begin position="14"/>
        <end position="15"/>
    </location>
    <ligand>
        <name>substrate</name>
        <note>ligand shared between two neighboring subunits</note>
    </ligand>
</feature>
<feature type="binding site" description="in other chain" evidence="1">
    <location>
        <begin position="82"/>
        <end position="84"/>
    </location>
    <ligand>
        <name>substrate</name>
        <note>ligand shared between two neighboring subunits</note>
    </ligand>
</feature>
<feature type="binding site" description="in other chain" evidence="1">
    <location>
        <begin position="108"/>
        <end position="109"/>
    </location>
    <ligand>
        <name>substrate</name>
        <note>ligand shared between two neighboring subunits</note>
    </ligand>
</feature>
<feature type="binding site" description="in other chain" evidence="1">
    <location>
        <position position="238"/>
    </location>
    <ligand>
        <name>substrate</name>
        <note>ligand shared between two neighboring subunits</note>
    </ligand>
</feature>
<feature type="binding site" evidence="1">
    <location>
        <position position="300"/>
    </location>
    <ligand>
        <name>substrate</name>
        <note>ligand shared between two neighboring subunits</note>
    </ligand>
</feature>
<feature type="binding site" description="in other chain" evidence="1">
    <location>
        <position position="326"/>
    </location>
    <ligand>
        <name>substrate</name>
        <note>ligand shared between two neighboring subunits</note>
    </ligand>
</feature>
<feature type="binding site" description="in other chain" evidence="1">
    <location>
        <position position="331"/>
    </location>
    <ligand>
        <name>substrate</name>
        <note>ligand shared between two neighboring subunits</note>
    </ligand>
</feature>
<feature type="binding site" description="in other chain" evidence="1">
    <location>
        <position position="335"/>
    </location>
    <ligand>
        <name>substrate</name>
        <note>ligand shared between two neighboring subunits</note>
    </ligand>
</feature>
<proteinExistence type="inferred from homology"/>
<gene>
    <name type="primary">ade8</name>
    <name type="ORF">SPBC14F5.09c</name>
</gene>
<dbReference type="EC" id="4.3.2.2"/>
<dbReference type="EMBL" id="CU329671">
    <property type="protein sequence ID" value="CAA19327.1"/>
    <property type="molecule type" value="Genomic_DNA"/>
</dbReference>
<dbReference type="PIR" id="T39455">
    <property type="entry name" value="T39455"/>
</dbReference>
<dbReference type="RefSeq" id="NP_596735.1">
    <property type="nucleotide sequence ID" value="NM_001022661.2"/>
</dbReference>
<dbReference type="SMR" id="O60105"/>
<dbReference type="BioGRID" id="276529">
    <property type="interactions" value="6"/>
</dbReference>
<dbReference type="FunCoup" id="O60105">
    <property type="interactions" value="615"/>
</dbReference>
<dbReference type="STRING" id="284812.O60105"/>
<dbReference type="iPTMnet" id="O60105"/>
<dbReference type="PaxDb" id="4896-SPBC14F5.09c.1"/>
<dbReference type="EnsemblFungi" id="SPBC14F5.09c.1">
    <property type="protein sequence ID" value="SPBC14F5.09c.1:pep"/>
    <property type="gene ID" value="SPBC14F5.09c"/>
</dbReference>
<dbReference type="GeneID" id="2539985"/>
<dbReference type="KEGG" id="spo:2539985"/>
<dbReference type="PomBase" id="SPBC14F5.09c">
    <property type="gene designation" value="ade8"/>
</dbReference>
<dbReference type="VEuPathDB" id="FungiDB:SPBC14F5.09c"/>
<dbReference type="eggNOG" id="KOG2700">
    <property type="taxonomic scope" value="Eukaryota"/>
</dbReference>
<dbReference type="HOGENOM" id="CLU_030949_1_1_1"/>
<dbReference type="InParanoid" id="O60105"/>
<dbReference type="OMA" id="VQENAMK"/>
<dbReference type="PhylomeDB" id="O60105"/>
<dbReference type="Reactome" id="R-SPO-73817">
    <property type="pathway name" value="Purine ribonucleoside monophosphate biosynthesis"/>
</dbReference>
<dbReference type="UniPathway" id="UPA00074">
    <property type="reaction ID" value="UER00132"/>
</dbReference>
<dbReference type="UniPathway" id="UPA00075">
    <property type="reaction ID" value="UER00336"/>
</dbReference>
<dbReference type="PRO" id="PR:O60105"/>
<dbReference type="Proteomes" id="UP000002485">
    <property type="component" value="Chromosome II"/>
</dbReference>
<dbReference type="GO" id="GO:0005829">
    <property type="term" value="C:cytosol"/>
    <property type="evidence" value="ECO:0007005"/>
    <property type="project" value="PomBase"/>
</dbReference>
<dbReference type="GO" id="GO:0005634">
    <property type="term" value="C:nucleus"/>
    <property type="evidence" value="ECO:0007005"/>
    <property type="project" value="PomBase"/>
</dbReference>
<dbReference type="GO" id="GO:0070626">
    <property type="term" value="F:(S)-2-(5-amino-1-(5-phospho-D-ribosyl)imidazole-4-carboxamido) succinate lyase (fumarate-forming) activity"/>
    <property type="evidence" value="ECO:0000314"/>
    <property type="project" value="PomBase"/>
</dbReference>
<dbReference type="GO" id="GO:0004018">
    <property type="term" value="F:N6-(1,2-dicarboxyethyl)AMP AMP-lyase (fumarate-forming) activity"/>
    <property type="evidence" value="ECO:0000314"/>
    <property type="project" value="PomBase"/>
</dbReference>
<dbReference type="GO" id="GO:0044208">
    <property type="term" value="P:'de novo' AMP biosynthetic process"/>
    <property type="evidence" value="ECO:0000314"/>
    <property type="project" value="PomBase"/>
</dbReference>
<dbReference type="GO" id="GO:0006189">
    <property type="term" value="P:'de novo' IMP biosynthetic process"/>
    <property type="evidence" value="ECO:0000266"/>
    <property type="project" value="PomBase"/>
</dbReference>
<dbReference type="CDD" id="cd03302">
    <property type="entry name" value="Adenylsuccinate_lyase_2"/>
    <property type="match status" value="1"/>
</dbReference>
<dbReference type="FunFam" id="1.10.40.30:FF:000005">
    <property type="entry name" value="Adenylosuccinate lyase"/>
    <property type="match status" value="1"/>
</dbReference>
<dbReference type="Gene3D" id="1.10.275.60">
    <property type="match status" value="1"/>
</dbReference>
<dbReference type="Gene3D" id="1.10.40.30">
    <property type="entry name" value="Fumarase/aspartase (C-terminal domain)"/>
    <property type="match status" value="1"/>
</dbReference>
<dbReference type="Gene3D" id="1.20.200.10">
    <property type="entry name" value="Fumarase/aspartase (Central domain)"/>
    <property type="match status" value="1"/>
</dbReference>
<dbReference type="InterPro" id="IPR019468">
    <property type="entry name" value="AdenyloSucc_lyase_C"/>
</dbReference>
<dbReference type="InterPro" id="IPR020557">
    <property type="entry name" value="Fumarate_lyase_CS"/>
</dbReference>
<dbReference type="InterPro" id="IPR000362">
    <property type="entry name" value="Fumarate_lyase_fam"/>
</dbReference>
<dbReference type="InterPro" id="IPR022761">
    <property type="entry name" value="Fumarate_lyase_N"/>
</dbReference>
<dbReference type="InterPro" id="IPR008948">
    <property type="entry name" value="L-Aspartase-like"/>
</dbReference>
<dbReference type="InterPro" id="IPR004769">
    <property type="entry name" value="Pur_lyase"/>
</dbReference>
<dbReference type="NCBIfam" id="TIGR00928">
    <property type="entry name" value="purB"/>
    <property type="match status" value="1"/>
</dbReference>
<dbReference type="PANTHER" id="PTHR43172">
    <property type="entry name" value="ADENYLOSUCCINATE LYASE"/>
    <property type="match status" value="1"/>
</dbReference>
<dbReference type="PANTHER" id="PTHR43172:SF1">
    <property type="entry name" value="ADENYLOSUCCINATE LYASE"/>
    <property type="match status" value="1"/>
</dbReference>
<dbReference type="Pfam" id="PF10397">
    <property type="entry name" value="ADSL_C"/>
    <property type="match status" value="1"/>
</dbReference>
<dbReference type="Pfam" id="PF00206">
    <property type="entry name" value="Lyase_1"/>
    <property type="match status" value="1"/>
</dbReference>
<dbReference type="PRINTS" id="PR00149">
    <property type="entry name" value="FUMRATELYASE"/>
</dbReference>
<dbReference type="SMART" id="SM00998">
    <property type="entry name" value="ADSL_C"/>
    <property type="match status" value="1"/>
</dbReference>
<dbReference type="SUPFAM" id="SSF48557">
    <property type="entry name" value="L-aspartase-like"/>
    <property type="match status" value="1"/>
</dbReference>
<dbReference type="PROSITE" id="PS00163">
    <property type="entry name" value="FUMARATE_LYASES"/>
    <property type="match status" value="1"/>
</dbReference>
<keyword id="KW-0456">Lyase</keyword>
<keyword id="KW-0658">Purine biosynthesis</keyword>
<keyword id="KW-1185">Reference proteome</keyword>
<protein>
    <recommendedName>
        <fullName>Adenylosuccinate lyase</fullName>
        <shortName>ASL</shortName>
        <ecNumber>4.3.2.2</ecNumber>
    </recommendedName>
    <alternativeName>
        <fullName>Adenylosuccinase</fullName>
        <shortName>ASase</shortName>
    </alternativeName>
</protein>